<comment type="function">
    <text evidence="1">Involved in unsaturated fatty acids biosynthesis. Catalyzes the dehydration of short chain beta-hydroxyacyl-ACPs and long chain saturated and unsaturated beta-hydroxyacyl-ACPs.</text>
</comment>
<comment type="catalytic activity">
    <reaction evidence="1">
        <text>a (3R)-hydroxyacyl-[ACP] = a (2E)-enoyl-[ACP] + H2O</text>
        <dbReference type="Rhea" id="RHEA:13097"/>
        <dbReference type="Rhea" id="RHEA-COMP:9925"/>
        <dbReference type="Rhea" id="RHEA-COMP:9945"/>
        <dbReference type="ChEBI" id="CHEBI:15377"/>
        <dbReference type="ChEBI" id="CHEBI:78784"/>
        <dbReference type="ChEBI" id="CHEBI:78827"/>
        <dbReference type="EC" id="4.2.1.59"/>
    </reaction>
</comment>
<comment type="subcellular location">
    <subcellularLocation>
        <location evidence="1">Cytoplasm</location>
    </subcellularLocation>
</comment>
<comment type="similarity">
    <text evidence="1">Belongs to the thioester dehydratase family. FabZ subfamily.</text>
</comment>
<feature type="chain" id="PRO_0000230811" description="3-hydroxyacyl-[acyl-carrier-protein] dehydratase FabZ">
    <location>
        <begin position="1"/>
        <end position="144"/>
    </location>
</feature>
<feature type="active site" evidence="1">
    <location>
        <position position="47"/>
    </location>
</feature>
<proteinExistence type="inferred from homology"/>
<reference key="1">
    <citation type="journal article" date="2009" name="BMC Genomics">
        <title>Metabolic analysis of the soil microbe Dechloromonas aromatica str. RCB: indications of a surprisingly complex life-style and cryptic anaerobic pathways for aromatic degradation.</title>
        <authorList>
            <person name="Salinero K.K."/>
            <person name="Keller K."/>
            <person name="Feil W.S."/>
            <person name="Feil H."/>
            <person name="Trong S."/>
            <person name="Di Bartolo G."/>
            <person name="Lapidus A."/>
        </authorList>
    </citation>
    <scope>NUCLEOTIDE SEQUENCE [LARGE SCALE GENOMIC DNA]</scope>
    <source>
        <strain>RCB</strain>
    </source>
</reference>
<accession>Q47F81</accession>
<dbReference type="EC" id="4.2.1.59" evidence="1"/>
<dbReference type="EMBL" id="CP000089">
    <property type="protein sequence ID" value="AAZ46500.1"/>
    <property type="molecule type" value="Genomic_DNA"/>
</dbReference>
<dbReference type="SMR" id="Q47F81"/>
<dbReference type="STRING" id="159087.Daro_1753"/>
<dbReference type="KEGG" id="dar:Daro_1753"/>
<dbReference type="eggNOG" id="COG0764">
    <property type="taxonomic scope" value="Bacteria"/>
</dbReference>
<dbReference type="HOGENOM" id="CLU_078912_1_0_4"/>
<dbReference type="OrthoDB" id="9772788at2"/>
<dbReference type="GO" id="GO:0005737">
    <property type="term" value="C:cytoplasm"/>
    <property type="evidence" value="ECO:0007669"/>
    <property type="project" value="UniProtKB-SubCell"/>
</dbReference>
<dbReference type="GO" id="GO:0016020">
    <property type="term" value="C:membrane"/>
    <property type="evidence" value="ECO:0007669"/>
    <property type="project" value="GOC"/>
</dbReference>
<dbReference type="GO" id="GO:0019171">
    <property type="term" value="F:(3R)-hydroxyacyl-[acyl-carrier-protein] dehydratase activity"/>
    <property type="evidence" value="ECO:0007669"/>
    <property type="project" value="UniProtKB-EC"/>
</dbReference>
<dbReference type="GO" id="GO:0006633">
    <property type="term" value="P:fatty acid biosynthetic process"/>
    <property type="evidence" value="ECO:0007669"/>
    <property type="project" value="UniProtKB-UniRule"/>
</dbReference>
<dbReference type="GO" id="GO:0009245">
    <property type="term" value="P:lipid A biosynthetic process"/>
    <property type="evidence" value="ECO:0007669"/>
    <property type="project" value="UniProtKB-UniRule"/>
</dbReference>
<dbReference type="CDD" id="cd01288">
    <property type="entry name" value="FabZ"/>
    <property type="match status" value="1"/>
</dbReference>
<dbReference type="FunFam" id="3.10.129.10:FF:000001">
    <property type="entry name" value="3-hydroxyacyl-[acyl-carrier-protein] dehydratase FabZ"/>
    <property type="match status" value="1"/>
</dbReference>
<dbReference type="Gene3D" id="3.10.129.10">
    <property type="entry name" value="Hotdog Thioesterase"/>
    <property type="match status" value="1"/>
</dbReference>
<dbReference type="HAMAP" id="MF_00406">
    <property type="entry name" value="FabZ"/>
    <property type="match status" value="1"/>
</dbReference>
<dbReference type="InterPro" id="IPR013114">
    <property type="entry name" value="FabA_FabZ"/>
</dbReference>
<dbReference type="InterPro" id="IPR010084">
    <property type="entry name" value="FabZ"/>
</dbReference>
<dbReference type="InterPro" id="IPR029069">
    <property type="entry name" value="HotDog_dom_sf"/>
</dbReference>
<dbReference type="NCBIfam" id="TIGR01750">
    <property type="entry name" value="fabZ"/>
    <property type="match status" value="1"/>
</dbReference>
<dbReference type="NCBIfam" id="NF000582">
    <property type="entry name" value="PRK00006.1"/>
    <property type="match status" value="1"/>
</dbReference>
<dbReference type="PANTHER" id="PTHR30272">
    <property type="entry name" value="3-HYDROXYACYL-[ACYL-CARRIER-PROTEIN] DEHYDRATASE"/>
    <property type="match status" value="1"/>
</dbReference>
<dbReference type="PANTHER" id="PTHR30272:SF1">
    <property type="entry name" value="3-HYDROXYACYL-[ACYL-CARRIER-PROTEIN] DEHYDRATASE"/>
    <property type="match status" value="1"/>
</dbReference>
<dbReference type="Pfam" id="PF07977">
    <property type="entry name" value="FabA"/>
    <property type="match status" value="1"/>
</dbReference>
<dbReference type="SUPFAM" id="SSF54637">
    <property type="entry name" value="Thioesterase/thiol ester dehydrase-isomerase"/>
    <property type="match status" value="1"/>
</dbReference>
<gene>
    <name evidence="1" type="primary">fabZ</name>
    <name type="ordered locus">Daro_1753</name>
</gene>
<sequence length="144" mass="16403">MDIIEILEHLPHRYPFLLVDRVLEIEPGKSIHAYKNVTINEPFFVGHFPHHPVMPGVLIMEALAQAAGILSFKSMDEKPSPDTVFYFAGIDEARFKKPVMPGDQLHLHIEIERQMRGVWKYKAEARVDGQLAASAKLMCAKRDL</sequence>
<organism>
    <name type="scientific">Dechloromonas aromatica (strain RCB)</name>
    <dbReference type="NCBI Taxonomy" id="159087"/>
    <lineage>
        <taxon>Bacteria</taxon>
        <taxon>Pseudomonadati</taxon>
        <taxon>Pseudomonadota</taxon>
        <taxon>Betaproteobacteria</taxon>
        <taxon>Rhodocyclales</taxon>
        <taxon>Azonexaceae</taxon>
        <taxon>Dechloromonas</taxon>
    </lineage>
</organism>
<keyword id="KW-0963">Cytoplasm</keyword>
<keyword id="KW-0441">Lipid A biosynthesis</keyword>
<keyword id="KW-0444">Lipid biosynthesis</keyword>
<keyword id="KW-0443">Lipid metabolism</keyword>
<keyword id="KW-0456">Lyase</keyword>
<protein>
    <recommendedName>
        <fullName evidence="1">3-hydroxyacyl-[acyl-carrier-protein] dehydratase FabZ</fullName>
        <ecNumber evidence="1">4.2.1.59</ecNumber>
    </recommendedName>
    <alternativeName>
        <fullName evidence="1">(3R)-hydroxymyristoyl-[acyl-carrier-protein] dehydratase</fullName>
        <shortName evidence="1">(3R)-hydroxymyristoyl-ACP dehydrase</shortName>
    </alternativeName>
    <alternativeName>
        <fullName evidence="1">Beta-hydroxyacyl-ACP dehydratase</fullName>
    </alternativeName>
</protein>
<evidence type="ECO:0000255" key="1">
    <source>
        <dbReference type="HAMAP-Rule" id="MF_00406"/>
    </source>
</evidence>
<name>FABZ_DECAR</name>